<organism>
    <name type="scientific">Arabidopsis thaliana</name>
    <name type="common">Mouse-ear cress</name>
    <dbReference type="NCBI Taxonomy" id="3702"/>
    <lineage>
        <taxon>Eukaryota</taxon>
        <taxon>Viridiplantae</taxon>
        <taxon>Streptophyta</taxon>
        <taxon>Embryophyta</taxon>
        <taxon>Tracheophyta</taxon>
        <taxon>Spermatophyta</taxon>
        <taxon>Magnoliopsida</taxon>
        <taxon>eudicotyledons</taxon>
        <taxon>Gunneridae</taxon>
        <taxon>Pentapetalae</taxon>
        <taxon>rosids</taxon>
        <taxon>malvids</taxon>
        <taxon>Brassicales</taxon>
        <taxon>Brassicaceae</taxon>
        <taxon>Camelineae</taxon>
        <taxon>Arabidopsis</taxon>
    </lineage>
</organism>
<sequence length="434" mass="48636">MEEELVVISKSIVNPRSLKKPTSVKKIQLTPWDLSRLRFGYLQRGLLFHKIEVKQLQASLSVALDRFYPLAGRLVKLKNDDDTVSFFISCDGSGVEFVHAVAKNIELSDVLELSGSVPGFFASFFPATGIKNYHGVSRSLLMVQVTEMKDGVFIGFGYNSTVADATSIWKFINAWSEICSKDSSGSQTFQRRLHLKGWFFDEIDYPIHIPDPETKPTSYVTTPTNLQEKMFHVTKENVLKLDAKANDEADQKISSIQAVLAYIWRSMVKHSGMSREEETHCRLPINMRQRLNPPLEEECFGNVSQTGIATVTVGELLDHGLGWAAMQINNMELSQTDEKAKAFAENWVKNIKIPVSVGSKDLVVTNSHRFDVYCNDFGWGKPIAARAGPPYLNGRLVVFKGIGEASLDFQACLLPQVVEKLVKDAEFNEYVSIV</sequence>
<gene>
    <name evidence="3" type="primary">EPS1</name>
    <name evidence="5" type="ordered locus">At5g67160</name>
    <name evidence="6" type="ORF">K21H1.12</name>
</gene>
<accession>Q9FH97</accession>
<accession>Q93Y30</accession>
<feature type="chain" id="PRO_0000439873" description="Protein ENHANCED PSEUDOMONAS SUSCEPTIBILITY 1">
    <location>
        <begin position="1"/>
        <end position="434"/>
    </location>
</feature>
<feature type="active site" description="Proton acceptor" evidence="1">
    <location>
        <position position="376"/>
    </location>
</feature>
<feature type="sequence conflict" description="In Ref. 3; AAK96747/AAL47333." evidence="4" ref="3">
    <original>A</original>
    <variation>T</variation>
    <location>
        <position position="243"/>
    </location>
</feature>
<feature type="strand" evidence="7">
    <location>
        <begin position="6"/>
        <end position="13"/>
    </location>
</feature>
<feature type="strand" evidence="7">
    <location>
        <begin position="26"/>
        <end position="28"/>
    </location>
</feature>
<feature type="helix" evidence="7">
    <location>
        <begin position="31"/>
        <end position="34"/>
    </location>
</feature>
<feature type="turn" evidence="7">
    <location>
        <begin position="35"/>
        <end position="38"/>
    </location>
</feature>
<feature type="strand" evidence="7">
    <location>
        <begin position="42"/>
        <end position="49"/>
    </location>
</feature>
<feature type="helix" evidence="7">
    <location>
        <begin position="53"/>
        <end position="66"/>
    </location>
</feature>
<feature type="helix" evidence="7">
    <location>
        <begin position="68"/>
        <end position="71"/>
    </location>
</feature>
<feature type="strand" evidence="7">
    <location>
        <begin position="73"/>
        <end position="78"/>
    </location>
</feature>
<feature type="strand" evidence="7">
    <location>
        <begin position="84"/>
        <end position="89"/>
    </location>
</feature>
<feature type="strand" evidence="7">
    <location>
        <begin position="95"/>
        <end position="102"/>
    </location>
</feature>
<feature type="helix" evidence="7">
    <location>
        <begin position="107"/>
        <end position="111"/>
    </location>
</feature>
<feature type="strand" evidence="7">
    <location>
        <begin position="115"/>
        <end position="119"/>
    </location>
</feature>
<feature type="helix" evidence="7">
    <location>
        <begin position="120"/>
        <end position="124"/>
    </location>
</feature>
<feature type="helix" evidence="7">
    <location>
        <begin position="132"/>
        <end position="136"/>
    </location>
</feature>
<feature type="strand" evidence="7">
    <location>
        <begin position="140"/>
        <end position="150"/>
    </location>
</feature>
<feature type="strand" evidence="7">
    <location>
        <begin position="152"/>
        <end position="158"/>
    </location>
</feature>
<feature type="turn" evidence="7">
    <location>
        <begin position="160"/>
        <end position="162"/>
    </location>
</feature>
<feature type="helix" evidence="7">
    <location>
        <begin position="165"/>
        <end position="181"/>
    </location>
</feature>
<feature type="helix" evidence="8">
    <location>
        <begin position="212"/>
        <end position="214"/>
    </location>
</feature>
<feature type="strand" evidence="7">
    <location>
        <begin position="220"/>
        <end position="222"/>
    </location>
</feature>
<feature type="strand" evidence="7">
    <location>
        <begin position="227"/>
        <end position="233"/>
    </location>
</feature>
<feature type="helix" evidence="7">
    <location>
        <begin position="235"/>
        <end position="248"/>
    </location>
</feature>
<feature type="helix" evidence="7">
    <location>
        <begin position="255"/>
        <end position="269"/>
    </location>
</feature>
<feature type="strand" evidence="7">
    <location>
        <begin position="277"/>
        <end position="286"/>
    </location>
</feature>
<feature type="turn" evidence="7">
    <location>
        <begin position="288"/>
        <end position="290"/>
    </location>
</feature>
<feature type="strand" evidence="7">
    <location>
        <begin position="291"/>
        <end position="293"/>
    </location>
</feature>
<feature type="strand" evidence="7">
    <location>
        <begin position="304"/>
        <end position="312"/>
    </location>
</feature>
<feature type="helix" evidence="7">
    <location>
        <begin position="313"/>
        <end position="318"/>
    </location>
</feature>
<feature type="helix" evidence="7">
    <location>
        <begin position="321"/>
        <end position="334"/>
    </location>
</feature>
<feature type="helix" evidence="7">
    <location>
        <begin position="337"/>
        <end position="349"/>
    </location>
</feature>
<feature type="strand" evidence="7">
    <location>
        <begin position="359"/>
        <end position="367"/>
    </location>
</feature>
<feature type="helix" evidence="7">
    <location>
        <begin position="372"/>
        <end position="374"/>
    </location>
</feature>
<feature type="strand" evidence="7">
    <location>
        <begin position="383"/>
        <end position="387"/>
    </location>
</feature>
<feature type="strand" evidence="7">
    <location>
        <begin position="395"/>
        <end position="400"/>
    </location>
</feature>
<feature type="strand" evidence="7">
    <location>
        <begin position="407"/>
        <end position="413"/>
    </location>
</feature>
<feature type="helix" evidence="7">
    <location>
        <begin position="415"/>
        <end position="422"/>
    </location>
</feature>
<feature type="helix" evidence="7">
    <location>
        <begin position="425"/>
        <end position="430"/>
    </location>
</feature>
<feature type="strand" evidence="8">
    <location>
        <begin position="432"/>
        <end position="434"/>
    </location>
</feature>
<dbReference type="EC" id="2.3.1.-" evidence="4"/>
<dbReference type="EMBL" id="AB020742">
    <property type="protein sequence ID" value="BAB10950.1"/>
    <property type="molecule type" value="Genomic_DNA"/>
</dbReference>
<dbReference type="EMBL" id="CP002688">
    <property type="protein sequence ID" value="AED98308.1"/>
    <property type="molecule type" value="Genomic_DNA"/>
</dbReference>
<dbReference type="EMBL" id="AY054556">
    <property type="protein sequence ID" value="AAK96747.1"/>
    <property type="molecule type" value="mRNA"/>
</dbReference>
<dbReference type="EMBL" id="AY064619">
    <property type="protein sequence ID" value="AAL47333.1"/>
    <property type="molecule type" value="mRNA"/>
</dbReference>
<dbReference type="EMBL" id="AY087209">
    <property type="protein sequence ID" value="AAM64765.1"/>
    <property type="molecule type" value="mRNA"/>
</dbReference>
<dbReference type="RefSeq" id="NP_201517.1">
    <property type="nucleotide sequence ID" value="NM_126116.2"/>
</dbReference>
<dbReference type="PDB" id="6WAO">
    <property type="method" value="X-ray"/>
    <property type="resolution" value="1.76 A"/>
    <property type="chains" value="A/B=1-434"/>
</dbReference>
<dbReference type="PDB" id="6WCS">
    <property type="method" value="X-ray"/>
    <property type="resolution" value="1.87 A"/>
    <property type="chains" value="A/B=1-434"/>
</dbReference>
<dbReference type="PDBsum" id="6WAO"/>
<dbReference type="PDBsum" id="6WCS"/>
<dbReference type="SMR" id="Q9FH97"/>
<dbReference type="FunCoup" id="Q9FH97">
    <property type="interactions" value="1"/>
</dbReference>
<dbReference type="STRING" id="3702.Q9FH97"/>
<dbReference type="PaxDb" id="3702-AT5G67160.1"/>
<dbReference type="ProteomicsDB" id="230054"/>
<dbReference type="EnsemblPlants" id="AT5G67160.1">
    <property type="protein sequence ID" value="AT5G67160.1"/>
    <property type="gene ID" value="AT5G67160"/>
</dbReference>
<dbReference type="GeneID" id="836851"/>
<dbReference type="Gramene" id="AT5G67160.1">
    <property type="protein sequence ID" value="AT5G67160.1"/>
    <property type="gene ID" value="AT5G67160"/>
</dbReference>
<dbReference type="KEGG" id="ath:AT5G67160"/>
<dbReference type="Araport" id="AT5G67160"/>
<dbReference type="TAIR" id="AT5G67160">
    <property type="gene designation" value="EPS1"/>
</dbReference>
<dbReference type="eggNOG" id="ENOG502QVP8">
    <property type="taxonomic scope" value="Eukaryota"/>
</dbReference>
<dbReference type="HOGENOM" id="CLU_014546_3_0_1"/>
<dbReference type="InParanoid" id="Q9FH97"/>
<dbReference type="OMA" id="WFFEEIE"/>
<dbReference type="OrthoDB" id="1862401at2759"/>
<dbReference type="PhylomeDB" id="Q9FH97"/>
<dbReference type="BioCyc" id="ARA:AT5G67160-MONOMER"/>
<dbReference type="BioCyc" id="MetaCyc:AT5G67160-MONOMER"/>
<dbReference type="PRO" id="PR:Q9FH97"/>
<dbReference type="Proteomes" id="UP000006548">
    <property type="component" value="Chromosome 5"/>
</dbReference>
<dbReference type="ExpressionAtlas" id="Q9FH97">
    <property type="expression patterns" value="baseline and differential"/>
</dbReference>
<dbReference type="GO" id="GO:0016746">
    <property type="term" value="F:acyltransferase activity"/>
    <property type="evidence" value="ECO:0007669"/>
    <property type="project" value="UniProtKB-KW"/>
</dbReference>
<dbReference type="GO" id="GO:0006952">
    <property type="term" value="P:defense response"/>
    <property type="evidence" value="ECO:0007669"/>
    <property type="project" value="UniProtKB-KW"/>
</dbReference>
<dbReference type="GO" id="GO:1900424">
    <property type="term" value="P:regulation of defense response to bacterium"/>
    <property type="evidence" value="ECO:0000315"/>
    <property type="project" value="UniProtKB"/>
</dbReference>
<dbReference type="GO" id="GO:1900150">
    <property type="term" value="P:regulation of defense response to fungus"/>
    <property type="evidence" value="ECO:0000315"/>
    <property type="project" value="UniProtKB"/>
</dbReference>
<dbReference type="GO" id="GO:0009617">
    <property type="term" value="P:response to bacterium"/>
    <property type="evidence" value="ECO:0000314"/>
    <property type="project" value="UniProtKB"/>
</dbReference>
<dbReference type="GO" id="GO:0009753">
    <property type="term" value="P:response to jasmonic acid"/>
    <property type="evidence" value="ECO:0000314"/>
    <property type="project" value="UniProtKB"/>
</dbReference>
<dbReference type="GO" id="GO:0009697">
    <property type="term" value="P:salicylic acid biosynthetic process"/>
    <property type="evidence" value="ECO:0000315"/>
    <property type="project" value="TAIR"/>
</dbReference>
<dbReference type="FunFam" id="3.30.559.10:FF:000059">
    <property type="entry name" value="Transferase family protein"/>
    <property type="match status" value="1"/>
</dbReference>
<dbReference type="Gene3D" id="3.30.559.10">
    <property type="entry name" value="Chloramphenicol acetyltransferase-like domain"/>
    <property type="match status" value="2"/>
</dbReference>
<dbReference type="InterPro" id="IPR023213">
    <property type="entry name" value="CAT-like_dom_sf"/>
</dbReference>
<dbReference type="InterPro" id="IPR051283">
    <property type="entry name" value="Sec_Metabolite_Acyltrans"/>
</dbReference>
<dbReference type="PANTHER" id="PTHR31896">
    <property type="entry name" value="FAMILY REGULATORY PROTEIN, PUTATIVE (AFU_ORTHOLOGUE AFUA_3G14730)-RELATED"/>
    <property type="match status" value="1"/>
</dbReference>
<dbReference type="PANTHER" id="PTHR31896:SF43">
    <property type="entry name" value="PROTEIN ENHANCED PSEUDOMONAS SUSCEPTIBILITY 1"/>
    <property type="match status" value="1"/>
</dbReference>
<dbReference type="Pfam" id="PF02458">
    <property type="entry name" value="Transferase"/>
    <property type="match status" value="1"/>
</dbReference>
<proteinExistence type="evidence at protein level"/>
<name>EPS1_ARATH</name>
<protein>
    <recommendedName>
        <fullName evidence="3">Protein ENHANCED PSEUDOMONAS SUSCEPTIBILITY 1</fullName>
        <ecNumber evidence="4">2.3.1.-</ecNumber>
    </recommendedName>
</protein>
<keyword id="KW-0002">3D-structure</keyword>
<keyword id="KW-0012">Acyltransferase</keyword>
<keyword id="KW-0611">Plant defense</keyword>
<keyword id="KW-1185">Reference proteome</keyword>
<keyword id="KW-0808">Transferase</keyword>
<comment type="function">
    <text evidence="2">Required for pathogen-induced salicylic acid (SA) accumulation and SA-mediated resistance to virulent and avirulent pathogens (e.g. P.syringae).</text>
</comment>
<comment type="induction">
    <text evidence="2">By pathogenic bacteria (e.g. P.syringae) and jasmonic acid (MeJA).</text>
</comment>
<comment type="disruption phenotype">
    <text evidence="2">Hypersusceptiblity to both virulent and avirulent strains of the bacterial pathogen P.syringae associated with impaired pathogen-mediated induction of salicylic acid (SA) and reduced pathogenesis-related (PR) genes induction. These phenotypes are reversed by SA treatment. In the cv. No-0 but not the cv. Columbia background, defects in SA accumulation or signaling enhances resistance to necrotrophic pathogens such as the fungi B.cinerea and A.brassicicola, leading to small necrotic spots and minor chlorosis, as well as reduced fungal growth.</text>
</comment>
<comment type="similarity">
    <text evidence="4">Belongs to the plant acyltransferase family.</text>
</comment>
<evidence type="ECO:0000255" key="1"/>
<evidence type="ECO:0000269" key="2">
    <source>
    </source>
</evidence>
<evidence type="ECO:0000303" key="3">
    <source>
    </source>
</evidence>
<evidence type="ECO:0000305" key="4"/>
<evidence type="ECO:0000312" key="5">
    <source>
        <dbReference type="Araport" id="AT5G67160"/>
    </source>
</evidence>
<evidence type="ECO:0000312" key="6">
    <source>
        <dbReference type="EMBL" id="BAB10950.1"/>
    </source>
</evidence>
<evidence type="ECO:0007829" key="7">
    <source>
        <dbReference type="PDB" id="6WAO"/>
    </source>
</evidence>
<evidence type="ECO:0007829" key="8">
    <source>
        <dbReference type="PDB" id="6WCS"/>
    </source>
</evidence>
<reference key="1">
    <citation type="journal article" date="2000" name="DNA Res.">
        <title>Structural analysis of Arabidopsis thaliana chromosome 5. X. Sequence features of the regions of 3,076,755 bp covered by sixty P1 and TAC clones.</title>
        <authorList>
            <person name="Sato S."/>
            <person name="Nakamura Y."/>
            <person name="Kaneko T."/>
            <person name="Katoh T."/>
            <person name="Asamizu E."/>
            <person name="Kotani H."/>
            <person name="Tabata S."/>
        </authorList>
    </citation>
    <scope>NUCLEOTIDE SEQUENCE [LARGE SCALE GENOMIC DNA]</scope>
    <source>
        <strain>cv. Columbia</strain>
    </source>
</reference>
<reference key="2">
    <citation type="journal article" date="2017" name="Plant J.">
        <title>Araport11: a complete reannotation of the Arabidopsis thaliana reference genome.</title>
        <authorList>
            <person name="Cheng C.Y."/>
            <person name="Krishnakumar V."/>
            <person name="Chan A.P."/>
            <person name="Thibaud-Nissen F."/>
            <person name="Schobel S."/>
            <person name="Town C.D."/>
        </authorList>
    </citation>
    <scope>GENOME REANNOTATION</scope>
    <source>
        <strain>cv. Columbia</strain>
    </source>
</reference>
<reference key="3">
    <citation type="journal article" date="2003" name="Science">
        <title>Empirical analysis of transcriptional activity in the Arabidopsis genome.</title>
        <authorList>
            <person name="Yamada K."/>
            <person name="Lim J."/>
            <person name="Dale J.M."/>
            <person name="Chen H."/>
            <person name="Shinn P."/>
            <person name="Palm C.J."/>
            <person name="Southwick A.M."/>
            <person name="Wu H.C."/>
            <person name="Kim C.J."/>
            <person name="Nguyen M."/>
            <person name="Pham P.K."/>
            <person name="Cheuk R.F."/>
            <person name="Karlin-Newmann G."/>
            <person name="Liu S.X."/>
            <person name="Lam B."/>
            <person name="Sakano H."/>
            <person name="Wu T."/>
            <person name="Yu G."/>
            <person name="Miranda M."/>
            <person name="Quach H.L."/>
            <person name="Tripp M."/>
            <person name="Chang C.H."/>
            <person name="Lee J.M."/>
            <person name="Toriumi M.J."/>
            <person name="Chan M.M."/>
            <person name="Tang C.C."/>
            <person name="Onodera C.S."/>
            <person name="Deng J.M."/>
            <person name="Akiyama K."/>
            <person name="Ansari Y."/>
            <person name="Arakawa T."/>
            <person name="Banh J."/>
            <person name="Banno F."/>
            <person name="Bowser L."/>
            <person name="Brooks S.Y."/>
            <person name="Carninci P."/>
            <person name="Chao Q."/>
            <person name="Choy N."/>
            <person name="Enju A."/>
            <person name="Goldsmith A.D."/>
            <person name="Gurjal M."/>
            <person name="Hansen N.F."/>
            <person name="Hayashizaki Y."/>
            <person name="Johnson-Hopson C."/>
            <person name="Hsuan V.W."/>
            <person name="Iida K."/>
            <person name="Karnes M."/>
            <person name="Khan S."/>
            <person name="Koesema E."/>
            <person name="Ishida J."/>
            <person name="Jiang P.X."/>
            <person name="Jones T."/>
            <person name="Kawai J."/>
            <person name="Kamiya A."/>
            <person name="Meyers C."/>
            <person name="Nakajima M."/>
            <person name="Narusaka M."/>
            <person name="Seki M."/>
            <person name="Sakurai T."/>
            <person name="Satou M."/>
            <person name="Tamse R."/>
            <person name="Vaysberg M."/>
            <person name="Wallender E.K."/>
            <person name="Wong C."/>
            <person name="Yamamura Y."/>
            <person name="Yuan S."/>
            <person name="Shinozaki K."/>
            <person name="Davis R.W."/>
            <person name="Theologis A."/>
            <person name="Ecker J.R."/>
        </authorList>
    </citation>
    <scope>NUCLEOTIDE SEQUENCE [LARGE SCALE MRNA]</scope>
    <source>
        <strain>cv. Columbia</strain>
    </source>
</reference>
<reference key="4">
    <citation type="submission" date="2002-03" db="EMBL/GenBank/DDBJ databases">
        <title>Full-length cDNA from Arabidopsis thaliana.</title>
        <authorList>
            <person name="Brover V.V."/>
            <person name="Troukhan M.E."/>
            <person name="Alexandrov N.A."/>
            <person name="Lu Y.-P."/>
            <person name="Flavell R.B."/>
            <person name="Feldmann K.A."/>
        </authorList>
    </citation>
    <scope>NUCLEOTIDE SEQUENCE [LARGE SCALE MRNA]</scope>
</reference>
<reference key="5">
    <citation type="journal article" date="2009" name="Plant J.">
        <title>An important role of a BAHD acyl transferase-like protein in plant innate immunity.</title>
        <authorList>
            <person name="Zheng Z."/>
            <person name="Qualley A."/>
            <person name="Fan B."/>
            <person name="Dudareva N."/>
            <person name="Chen Z."/>
        </authorList>
    </citation>
    <scope>FUNCTION</scope>
    <scope>DISRUPTION PHENOTYPE</scope>
    <scope>INDUCTION BY PATHOGENIC BACTERIA AND JASMONIC ACID</scope>
    <source>
        <strain>cv. Columbia</strain>
        <strain>cv. No-0</strain>
    </source>
</reference>
<reference key="6">
    <citation type="journal article" date="2009" name="Plant Signal. Behav.">
        <title>Biosynthesis of salicylic acid in plants.</title>
        <authorList>
            <person name="Chen Z."/>
            <person name="Zheng Z."/>
            <person name="Huang J."/>
            <person name="Lai Z."/>
            <person name="Fan B."/>
        </authorList>
    </citation>
    <scope>REVIEW</scope>
</reference>